<sequence>MASKNSASLALFFALNILFFTLTAGTNCRCNPSPKPRPLPNPKVPSPKVPTPSVPSPYVPTPSVPSPSVPTPSVPSPSVPSPNPTPVIPPRTPGSSGNCPIDALRLGVCANVLSGLLNVQLGQPSPQPCCSLIQGLVDLDAAVCLCTALRANVLGINLNVPISLSVLLNVCNRRLPSNFQCA</sequence>
<evidence type="ECO:0000250" key="1"/>
<evidence type="ECO:0000255" key="2"/>
<evidence type="ECO:0000256" key="3">
    <source>
        <dbReference type="SAM" id="MobiDB-lite"/>
    </source>
</evidence>
<evidence type="ECO:0000269" key="4">
    <source>
    </source>
</evidence>
<evidence type="ECO:0000269" key="5">
    <source>
    </source>
</evidence>
<evidence type="ECO:0000269" key="6">
    <source>
    </source>
</evidence>
<evidence type="ECO:0000305" key="7"/>
<protein>
    <recommendedName>
        <fullName>pEARLI1-like lipid transfer protein 2</fullName>
    </recommendedName>
</protein>
<reference key="1">
    <citation type="journal article" date="1999" name="Nature">
        <title>Sequence and analysis of chromosome 4 of the plant Arabidopsis thaliana.</title>
        <authorList>
            <person name="Mayer K.F.X."/>
            <person name="Schueller C."/>
            <person name="Wambutt R."/>
            <person name="Murphy G."/>
            <person name="Volckaert G."/>
            <person name="Pohl T."/>
            <person name="Duesterhoeft A."/>
            <person name="Stiekema W."/>
            <person name="Entian K.-D."/>
            <person name="Terryn N."/>
            <person name="Harris B."/>
            <person name="Ansorge W."/>
            <person name="Brandt P."/>
            <person name="Grivell L.A."/>
            <person name="Rieger M."/>
            <person name="Weichselgartner M."/>
            <person name="de Simone V."/>
            <person name="Obermaier B."/>
            <person name="Mache R."/>
            <person name="Mueller M."/>
            <person name="Kreis M."/>
            <person name="Delseny M."/>
            <person name="Puigdomenech P."/>
            <person name="Watson M."/>
            <person name="Schmidtheini T."/>
            <person name="Reichert B."/>
            <person name="Portetelle D."/>
            <person name="Perez-Alonso M."/>
            <person name="Boutry M."/>
            <person name="Bancroft I."/>
            <person name="Vos P."/>
            <person name="Hoheisel J."/>
            <person name="Zimmermann W."/>
            <person name="Wedler H."/>
            <person name="Ridley P."/>
            <person name="Langham S.-A."/>
            <person name="McCullagh B."/>
            <person name="Bilham L."/>
            <person name="Robben J."/>
            <person name="van der Schueren J."/>
            <person name="Grymonprez B."/>
            <person name="Chuang Y.-J."/>
            <person name="Vandenbussche F."/>
            <person name="Braeken M."/>
            <person name="Weltjens I."/>
            <person name="Voet M."/>
            <person name="Bastiaens I."/>
            <person name="Aert R."/>
            <person name="Defoor E."/>
            <person name="Weitzenegger T."/>
            <person name="Bothe G."/>
            <person name="Ramsperger U."/>
            <person name="Hilbert H."/>
            <person name="Braun M."/>
            <person name="Holzer E."/>
            <person name="Brandt A."/>
            <person name="Peters S."/>
            <person name="van Staveren M."/>
            <person name="Dirkse W."/>
            <person name="Mooijman P."/>
            <person name="Klein Lankhorst R."/>
            <person name="Rose M."/>
            <person name="Hauf J."/>
            <person name="Koetter P."/>
            <person name="Berneiser S."/>
            <person name="Hempel S."/>
            <person name="Feldpausch M."/>
            <person name="Lamberth S."/>
            <person name="Van den Daele H."/>
            <person name="De Keyser A."/>
            <person name="Buysshaert C."/>
            <person name="Gielen J."/>
            <person name="Villarroel R."/>
            <person name="De Clercq R."/>
            <person name="van Montagu M."/>
            <person name="Rogers J."/>
            <person name="Cronin A."/>
            <person name="Quail M.A."/>
            <person name="Bray-Allen S."/>
            <person name="Clark L."/>
            <person name="Doggett J."/>
            <person name="Hall S."/>
            <person name="Kay M."/>
            <person name="Lennard N."/>
            <person name="McLay K."/>
            <person name="Mayes R."/>
            <person name="Pettett A."/>
            <person name="Rajandream M.A."/>
            <person name="Lyne M."/>
            <person name="Benes V."/>
            <person name="Rechmann S."/>
            <person name="Borkova D."/>
            <person name="Bloecker H."/>
            <person name="Scharfe M."/>
            <person name="Grimm M."/>
            <person name="Loehnert T.-H."/>
            <person name="Dose S."/>
            <person name="de Haan M."/>
            <person name="Maarse A.C."/>
            <person name="Schaefer M."/>
            <person name="Mueller-Auer S."/>
            <person name="Gabel C."/>
            <person name="Fuchs M."/>
            <person name="Fartmann B."/>
            <person name="Granderath K."/>
            <person name="Dauner D."/>
            <person name="Herzl A."/>
            <person name="Neumann S."/>
            <person name="Argiriou A."/>
            <person name="Vitale D."/>
            <person name="Liguori R."/>
            <person name="Piravandi E."/>
            <person name="Massenet O."/>
            <person name="Quigley F."/>
            <person name="Clabauld G."/>
            <person name="Muendlein A."/>
            <person name="Felber R."/>
            <person name="Schnabl S."/>
            <person name="Hiller R."/>
            <person name="Schmidt W."/>
            <person name="Lecharny A."/>
            <person name="Aubourg S."/>
            <person name="Chefdor F."/>
            <person name="Cooke R."/>
            <person name="Berger C."/>
            <person name="Monfort A."/>
            <person name="Casacuberta E."/>
            <person name="Gibbons T."/>
            <person name="Weber N."/>
            <person name="Vandenbol M."/>
            <person name="Bargues M."/>
            <person name="Terol J."/>
            <person name="Torres A."/>
            <person name="Perez-Perez A."/>
            <person name="Purnelle B."/>
            <person name="Bent E."/>
            <person name="Johnson S."/>
            <person name="Tacon D."/>
            <person name="Jesse T."/>
            <person name="Heijnen L."/>
            <person name="Schwarz S."/>
            <person name="Scholler P."/>
            <person name="Heber S."/>
            <person name="Francs P."/>
            <person name="Bielke C."/>
            <person name="Frishman D."/>
            <person name="Haase D."/>
            <person name="Lemcke K."/>
            <person name="Mewes H.-W."/>
            <person name="Stocker S."/>
            <person name="Zaccaria P."/>
            <person name="Bevan M."/>
            <person name="Wilson R.K."/>
            <person name="de la Bastide M."/>
            <person name="Habermann K."/>
            <person name="Parnell L."/>
            <person name="Dedhia N."/>
            <person name="Gnoj L."/>
            <person name="Schutz K."/>
            <person name="Huang E."/>
            <person name="Spiegel L."/>
            <person name="Sekhon M."/>
            <person name="Murray J."/>
            <person name="Sheet P."/>
            <person name="Cordes M."/>
            <person name="Abu-Threideh J."/>
            <person name="Stoneking T."/>
            <person name="Kalicki J."/>
            <person name="Graves T."/>
            <person name="Harmon G."/>
            <person name="Edwards J."/>
            <person name="Latreille P."/>
            <person name="Courtney L."/>
            <person name="Cloud J."/>
            <person name="Abbott A."/>
            <person name="Scott K."/>
            <person name="Johnson D."/>
            <person name="Minx P."/>
            <person name="Bentley D."/>
            <person name="Fulton B."/>
            <person name="Miller N."/>
            <person name="Greco T."/>
            <person name="Kemp K."/>
            <person name="Kramer J."/>
            <person name="Fulton L."/>
            <person name="Mardis E."/>
            <person name="Dante M."/>
            <person name="Pepin K."/>
            <person name="Hillier L.W."/>
            <person name="Nelson J."/>
            <person name="Spieth J."/>
            <person name="Ryan E."/>
            <person name="Andrews S."/>
            <person name="Geisel C."/>
            <person name="Layman D."/>
            <person name="Du H."/>
            <person name="Ali J."/>
            <person name="Berghoff A."/>
            <person name="Jones K."/>
            <person name="Drone K."/>
            <person name="Cotton M."/>
            <person name="Joshu C."/>
            <person name="Antonoiu B."/>
            <person name="Zidanic M."/>
            <person name="Strong C."/>
            <person name="Sun H."/>
            <person name="Lamar B."/>
            <person name="Yordan C."/>
            <person name="Ma P."/>
            <person name="Zhong J."/>
            <person name="Preston R."/>
            <person name="Vil D."/>
            <person name="Shekher M."/>
            <person name="Matero A."/>
            <person name="Shah R."/>
            <person name="Swaby I.K."/>
            <person name="O'Shaughnessy A."/>
            <person name="Rodriguez M."/>
            <person name="Hoffman J."/>
            <person name="Till S."/>
            <person name="Granat S."/>
            <person name="Shohdy N."/>
            <person name="Hasegawa A."/>
            <person name="Hameed A."/>
            <person name="Lodhi M."/>
            <person name="Johnson A."/>
            <person name="Chen E."/>
            <person name="Marra M.A."/>
            <person name="Martienssen R."/>
            <person name="McCombie W.R."/>
        </authorList>
    </citation>
    <scope>NUCLEOTIDE SEQUENCE [LARGE SCALE GENOMIC DNA]</scope>
    <source>
        <strain>cv. Columbia</strain>
    </source>
</reference>
<reference key="2">
    <citation type="journal article" date="2017" name="Plant J.">
        <title>Araport11: a complete reannotation of the Arabidopsis thaliana reference genome.</title>
        <authorList>
            <person name="Cheng C.Y."/>
            <person name="Krishnakumar V."/>
            <person name="Chan A.P."/>
            <person name="Thibaud-Nissen F."/>
            <person name="Schobel S."/>
            <person name="Town C.D."/>
        </authorList>
    </citation>
    <scope>GENOME REANNOTATION</scope>
    <source>
        <strain>cv. Columbia</strain>
    </source>
</reference>
<reference key="3">
    <citation type="journal article" date="2003" name="Science">
        <title>Empirical analysis of transcriptional activity in the Arabidopsis genome.</title>
        <authorList>
            <person name="Yamada K."/>
            <person name="Lim J."/>
            <person name="Dale J.M."/>
            <person name="Chen H."/>
            <person name="Shinn P."/>
            <person name="Palm C.J."/>
            <person name="Southwick A.M."/>
            <person name="Wu H.C."/>
            <person name="Kim C.J."/>
            <person name="Nguyen M."/>
            <person name="Pham P.K."/>
            <person name="Cheuk R.F."/>
            <person name="Karlin-Newmann G."/>
            <person name="Liu S.X."/>
            <person name="Lam B."/>
            <person name="Sakano H."/>
            <person name="Wu T."/>
            <person name="Yu G."/>
            <person name="Miranda M."/>
            <person name="Quach H.L."/>
            <person name="Tripp M."/>
            <person name="Chang C.H."/>
            <person name="Lee J.M."/>
            <person name="Toriumi M.J."/>
            <person name="Chan M.M."/>
            <person name="Tang C.C."/>
            <person name="Onodera C.S."/>
            <person name="Deng J.M."/>
            <person name="Akiyama K."/>
            <person name="Ansari Y."/>
            <person name="Arakawa T."/>
            <person name="Banh J."/>
            <person name="Banno F."/>
            <person name="Bowser L."/>
            <person name="Brooks S.Y."/>
            <person name="Carninci P."/>
            <person name="Chao Q."/>
            <person name="Choy N."/>
            <person name="Enju A."/>
            <person name="Goldsmith A.D."/>
            <person name="Gurjal M."/>
            <person name="Hansen N.F."/>
            <person name="Hayashizaki Y."/>
            <person name="Johnson-Hopson C."/>
            <person name="Hsuan V.W."/>
            <person name="Iida K."/>
            <person name="Karnes M."/>
            <person name="Khan S."/>
            <person name="Koesema E."/>
            <person name="Ishida J."/>
            <person name="Jiang P.X."/>
            <person name="Jones T."/>
            <person name="Kawai J."/>
            <person name="Kamiya A."/>
            <person name="Meyers C."/>
            <person name="Nakajima M."/>
            <person name="Narusaka M."/>
            <person name="Seki M."/>
            <person name="Sakurai T."/>
            <person name="Satou M."/>
            <person name="Tamse R."/>
            <person name="Vaysberg M."/>
            <person name="Wallender E.K."/>
            <person name="Wong C."/>
            <person name="Yamamura Y."/>
            <person name="Yuan S."/>
            <person name="Shinozaki K."/>
            <person name="Davis R.W."/>
            <person name="Theologis A."/>
            <person name="Ecker J.R."/>
        </authorList>
    </citation>
    <scope>NUCLEOTIDE SEQUENCE [LARGE SCALE MRNA]</scope>
    <source>
        <strain>cv. Columbia</strain>
    </source>
</reference>
<reference key="4">
    <citation type="journal article" date="2007" name="Plant J.">
        <title>Cuticular defects lead to full immunity to a major plant pathogen.</title>
        <authorList>
            <person name="Chassot C."/>
            <person name="Nawrath C."/>
            <person name="Metraux J.-P."/>
        </authorList>
    </citation>
    <scope>FUNCTION</scope>
</reference>
<reference key="5">
    <citation type="journal article" date="2007" name="Planta">
        <title>Cold responsive EARLI1 type HyPRPs improve freezing survival of yeast cells and form higher order complexes in plants.</title>
        <authorList>
            <person name="Zhang Y."/>
            <person name="Schlappi M."/>
        </authorList>
    </citation>
    <scope>FUNCTION</scope>
    <scope>INDUCTION BY COLD</scope>
    <scope>GENE FAMILY</scope>
    <source>
        <strain>cv. Columbia</strain>
    </source>
</reference>
<reference key="6">
    <citation type="journal article" date="2011" name="Plant Biol.">
        <title>Influence of EARLI1-like genes on flowering time and lignin synthesis of Arabidopsis thaliana.</title>
        <authorList>
            <person name="Shi Y."/>
            <person name="Zhang X."/>
            <person name="Xu Z.Y."/>
            <person name="Li L."/>
            <person name="Zhang C."/>
            <person name="Schlappi M."/>
            <person name="Xu Z.Q."/>
        </authorList>
    </citation>
    <scope>FUNCTION</scope>
    <scope>DISRUPTION PHENOTYPE</scope>
    <scope>GENE FAMILY</scope>
    <source>
        <strain>cv. Columbia</strain>
    </source>
</reference>
<proteinExistence type="evidence at transcript level"/>
<gene>
    <name type="ordered locus">At4g12490</name>
    <name type="ORF">T1P17.80</name>
</gene>
<keyword id="KW-0134">Cell wall</keyword>
<keyword id="KW-0611">Plant defense</keyword>
<keyword id="KW-1185">Reference proteome</keyword>
<keyword id="KW-0677">Repeat</keyword>
<keyword id="KW-0964">Secreted</keyword>
<keyword id="KW-0732">Signal</keyword>
<feature type="signal peptide" evidence="2">
    <location>
        <begin position="1"/>
        <end position="25"/>
    </location>
</feature>
<feature type="chain" id="PRO_0000425606" description="pEARLI1-like lipid transfer protein 2">
    <location>
        <begin position="26"/>
        <end position="182"/>
    </location>
</feature>
<feature type="repeat" description="1" evidence="1">
    <location>
        <begin position="42"/>
        <end position="46"/>
    </location>
</feature>
<feature type="repeat" description="2" evidence="1">
    <location>
        <begin position="47"/>
        <end position="51"/>
    </location>
</feature>
<feature type="repeat" description="3" evidence="1">
    <location>
        <begin position="52"/>
        <end position="56"/>
    </location>
</feature>
<feature type="repeat" description="4" evidence="1">
    <location>
        <begin position="62"/>
        <end position="66"/>
    </location>
</feature>
<feature type="repeat" description="5" evidence="1">
    <location>
        <begin position="67"/>
        <end position="71"/>
    </location>
</feature>
<feature type="repeat" description="6" evidence="1">
    <location>
        <begin position="72"/>
        <end position="76"/>
    </location>
</feature>
<feature type="repeat" description="7" evidence="1">
    <location>
        <begin position="77"/>
        <end position="81"/>
    </location>
</feature>
<feature type="region of interest" description="Disordered" evidence="3">
    <location>
        <begin position="33"/>
        <end position="94"/>
    </location>
</feature>
<feature type="region of interest" description="7 X 5 AA repeats of P-[KS]-V-P-[ST]" evidence="1">
    <location>
        <begin position="42"/>
        <end position="81"/>
    </location>
</feature>
<feature type="compositionally biased region" description="Pro residues" evidence="3">
    <location>
        <begin position="33"/>
        <end position="92"/>
    </location>
</feature>
<name>ERLL2_ARATH</name>
<organism>
    <name type="scientific">Arabidopsis thaliana</name>
    <name type="common">Mouse-ear cress</name>
    <dbReference type="NCBI Taxonomy" id="3702"/>
    <lineage>
        <taxon>Eukaryota</taxon>
        <taxon>Viridiplantae</taxon>
        <taxon>Streptophyta</taxon>
        <taxon>Embryophyta</taxon>
        <taxon>Tracheophyta</taxon>
        <taxon>Spermatophyta</taxon>
        <taxon>Magnoliopsida</taxon>
        <taxon>eudicotyledons</taxon>
        <taxon>Gunneridae</taxon>
        <taxon>Pentapetalae</taxon>
        <taxon>rosids</taxon>
        <taxon>malvids</taxon>
        <taxon>Brassicales</taxon>
        <taxon>Brassicaceae</taxon>
        <taxon>Camelineae</taxon>
        <taxon>Arabidopsis</taxon>
    </lineage>
</organism>
<accession>Q9SU34</accession>
<comment type="function">
    <text evidence="4 5 6">Probable lipid transfer protein (LTP). May improve freezing survival. Seems to control the flowering process and lignin synthesis. Confers resistance to Botrytis cinerea.</text>
</comment>
<comment type="subcellular location">
    <subcellularLocation>
        <location evidence="1">Secreted</location>
        <location evidence="1">Cell wall</location>
    </subcellularLocation>
</comment>
<comment type="induction">
    <text evidence="5">Transient accumulation in response to a brief exposures to cold.</text>
</comment>
<comment type="disruption phenotype">
    <text evidence="6">Reduced cutin accumulation due to lower cutin biosynthesis. Early flowering in long-day conditions.</text>
</comment>
<comment type="similarity">
    <text evidence="7">Belongs to the plant LTP family. PEARLI1 subfamily.</text>
</comment>
<dbReference type="EMBL" id="AL049730">
    <property type="protein sequence ID" value="CAB41719.1"/>
    <property type="molecule type" value="Genomic_DNA"/>
</dbReference>
<dbReference type="EMBL" id="AL161534">
    <property type="protein sequence ID" value="CAB78292.1"/>
    <property type="molecule type" value="Genomic_DNA"/>
</dbReference>
<dbReference type="EMBL" id="CP002687">
    <property type="protein sequence ID" value="AEE83139.1"/>
    <property type="molecule type" value="Genomic_DNA"/>
</dbReference>
<dbReference type="EMBL" id="AY052336">
    <property type="protein sequence ID" value="AAK96529.1"/>
    <property type="molecule type" value="mRNA"/>
</dbReference>
<dbReference type="EMBL" id="AY061906">
    <property type="protein sequence ID" value="AAL31233.1"/>
    <property type="molecule type" value="mRNA"/>
</dbReference>
<dbReference type="PIR" id="T07641">
    <property type="entry name" value="T07641"/>
</dbReference>
<dbReference type="RefSeq" id="NP_192986.1">
    <property type="nucleotide sequence ID" value="NM_117319.2"/>
</dbReference>
<dbReference type="SMR" id="Q9SU34"/>
<dbReference type="STRING" id="3702.Q9SU34"/>
<dbReference type="GlyGen" id="Q9SU34">
    <property type="glycosylation" value="4 sites"/>
</dbReference>
<dbReference type="PaxDb" id="3702-AT4G12490.1"/>
<dbReference type="ProteomicsDB" id="220697"/>
<dbReference type="EnsemblPlants" id="AT4G12490.1">
    <property type="protein sequence ID" value="AT4G12490.1"/>
    <property type="gene ID" value="AT4G12490"/>
</dbReference>
<dbReference type="GeneID" id="826861"/>
<dbReference type="Gramene" id="AT4G12490.1">
    <property type="protein sequence ID" value="AT4G12490.1"/>
    <property type="gene ID" value="AT4G12490"/>
</dbReference>
<dbReference type="KEGG" id="ath:AT4G12490"/>
<dbReference type="Araport" id="AT4G12490"/>
<dbReference type="TAIR" id="AT4G12490">
    <property type="gene designation" value="AZI3"/>
</dbReference>
<dbReference type="eggNOG" id="ENOG502RZES">
    <property type="taxonomic scope" value="Eukaryota"/>
</dbReference>
<dbReference type="HOGENOM" id="CLU_055715_3_2_1"/>
<dbReference type="InParanoid" id="Q9SU34"/>
<dbReference type="OMA" id="MCANLLG"/>
<dbReference type="PRO" id="PR:Q9SU34"/>
<dbReference type="Proteomes" id="UP000006548">
    <property type="component" value="Chromosome 4"/>
</dbReference>
<dbReference type="ExpressionAtlas" id="Q9SU34">
    <property type="expression patterns" value="baseline and differential"/>
</dbReference>
<dbReference type="GO" id="GO:0009707">
    <property type="term" value="C:chloroplast outer membrane"/>
    <property type="evidence" value="ECO:0000314"/>
    <property type="project" value="TAIR"/>
</dbReference>
<dbReference type="GO" id="GO:0005783">
    <property type="term" value="C:endoplasmic reticulum"/>
    <property type="evidence" value="ECO:0000314"/>
    <property type="project" value="TAIR"/>
</dbReference>
<dbReference type="GO" id="GO:0005576">
    <property type="term" value="C:extracellular region"/>
    <property type="evidence" value="ECO:0007669"/>
    <property type="project" value="UniProtKB-KW"/>
</dbReference>
<dbReference type="GO" id="GO:0009506">
    <property type="term" value="C:plasmodesma"/>
    <property type="evidence" value="ECO:0000314"/>
    <property type="project" value="TAIR"/>
</dbReference>
<dbReference type="GO" id="GO:0050832">
    <property type="term" value="P:defense response to fungus"/>
    <property type="evidence" value="ECO:0000315"/>
    <property type="project" value="TAIR"/>
</dbReference>
<dbReference type="CDD" id="cd01958">
    <property type="entry name" value="HPS_like"/>
    <property type="match status" value="1"/>
</dbReference>
<dbReference type="FunFam" id="1.10.110.10:FF:000003">
    <property type="entry name" value="pEARLI1-like lipid transfer protein 1"/>
    <property type="match status" value="1"/>
</dbReference>
<dbReference type="Gene3D" id="1.10.110.10">
    <property type="entry name" value="Plant lipid-transfer and hydrophobic proteins"/>
    <property type="match status" value="1"/>
</dbReference>
<dbReference type="InterPro" id="IPR036312">
    <property type="entry name" value="Bifun_inhib/LTP/seed_sf"/>
</dbReference>
<dbReference type="InterPro" id="IPR016140">
    <property type="entry name" value="Bifunc_inhib/LTP/seed_store"/>
</dbReference>
<dbReference type="InterPro" id="IPR027923">
    <property type="entry name" value="Hydrophob_seed_dom"/>
</dbReference>
<dbReference type="InterPro" id="IPR051636">
    <property type="entry name" value="Plant_LTP/defense-related"/>
</dbReference>
<dbReference type="PANTHER" id="PTHR31731">
    <property type="match status" value="1"/>
</dbReference>
<dbReference type="Pfam" id="PF14547">
    <property type="entry name" value="Hydrophob_seed"/>
    <property type="match status" value="1"/>
</dbReference>
<dbReference type="SMART" id="SM00499">
    <property type="entry name" value="AAI"/>
    <property type="match status" value="1"/>
</dbReference>
<dbReference type="SUPFAM" id="SSF47699">
    <property type="entry name" value="Bifunctional inhibitor/lipid-transfer protein/seed storage 2S albumin"/>
    <property type="match status" value="1"/>
</dbReference>